<reference key="1">
    <citation type="journal article" date="2004" name="Proc. Natl. Acad. Sci. U.S.A.">
        <title>Genome sequence of the deep-sea gamma-proteobacterium Idiomarina loihiensis reveals amino acid fermentation as a source of carbon and energy.</title>
        <authorList>
            <person name="Hou S."/>
            <person name="Saw J.H."/>
            <person name="Lee K.S."/>
            <person name="Freitas T.A."/>
            <person name="Belisle C."/>
            <person name="Kawarabayasi Y."/>
            <person name="Donachie S.P."/>
            <person name="Pikina A."/>
            <person name="Galperin M.Y."/>
            <person name="Koonin E.V."/>
            <person name="Makarova K.S."/>
            <person name="Omelchenko M.V."/>
            <person name="Sorokin A."/>
            <person name="Wolf Y.I."/>
            <person name="Li Q.X."/>
            <person name="Keum Y.S."/>
            <person name="Campbell S."/>
            <person name="Denery J."/>
            <person name="Aizawa S."/>
            <person name="Shibata S."/>
            <person name="Malahoff A."/>
            <person name="Alam M."/>
        </authorList>
    </citation>
    <scope>NUCLEOTIDE SEQUENCE [LARGE SCALE GENOMIC DNA]</scope>
    <source>
        <strain>ATCC BAA-735 / DSM 15497 / L2-TR</strain>
    </source>
</reference>
<organism>
    <name type="scientific">Idiomarina loihiensis (strain ATCC BAA-735 / DSM 15497 / L2-TR)</name>
    <dbReference type="NCBI Taxonomy" id="283942"/>
    <lineage>
        <taxon>Bacteria</taxon>
        <taxon>Pseudomonadati</taxon>
        <taxon>Pseudomonadota</taxon>
        <taxon>Gammaproteobacteria</taxon>
        <taxon>Alteromonadales</taxon>
        <taxon>Idiomarinaceae</taxon>
        <taxon>Idiomarina</taxon>
    </lineage>
</organism>
<feature type="chain" id="PRO_0000162827" description="Thiazole synthase">
    <location>
        <begin position="1"/>
        <end position="256"/>
    </location>
</feature>
<feature type="active site" description="Schiff-base intermediate with DXP" evidence="1">
    <location>
        <position position="95"/>
    </location>
</feature>
<feature type="binding site" evidence="1">
    <location>
        <position position="156"/>
    </location>
    <ligand>
        <name>1-deoxy-D-xylulose 5-phosphate</name>
        <dbReference type="ChEBI" id="CHEBI:57792"/>
    </ligand>
</feature>
<feature type="binding site" evidence="1">
    <location>
        <begin position="182"/>
        <end position="183"/>
    </location>
    <ligand>
        <name>1-deoxy-D-xylulose 5-phosphate</name>
        <dbReference type="ChEBI" id="CHEBI:57792"/>
    </ligand>
</feature>
<feature type="binding site" evidence="1">
    <location>
        <begin position="204"/>
        <end position="205"/>
    </location>
    <ligand>
        <name>1-deoxy-D-xylulose 5-phosphate</name>
        <dbReference type="ChEBI" id="CHEBI:57792"/>
    </ligand>
</feature>
<protein>
    <recommendedName>
        <fullName evidence="1">Thiazole synthase</fullName>
        <ecNumber evidence="1">2.8.1.10</ecNumber>
    </recommendedName>
</protein>
<proteinExistence type="inferred from homology"/>
<comment type="function">
    <text evidence="1">Catalyzes the rearrangement of 1-deoxy-D-xylulose 5-phosphate (DXP) to produce the thiazole phosphate moiety of thiamine. Sulfur is provided by the thiocarboxylate moiety of the carrier protein ThiS. In vitro, sulfur can be provided by H(2)S.</text>
</comment>
<comment type="catalytic activity">
    <reaction evidence="1">
        <text>[ThiS sulfur-carrier protein]-C-terminal-Gly-aminoethanethioate + 2-iminoacetate + 1-deoxy-D-xylulose 5-phosphate = [ThiS sulfur-carrier protein]-C-terminal Gly-Gly + 2-[(2R,5Z)-2-carboxy-4-methylthiazol-5(2H)-ylidene]ethyl phosphate + 2 H2O + H(+)</text>
        <dbReference type="Rhea" id="RHEA:26297"/>
        <dbReference type="Rhea" id="RHEA-COMP:12909"/>
        <dbReference type="Rhea" id="RHEA-COMP:19908"/>
        <dbReference type="ChEBI" id="CHEBI:15377"/>
        <dbReference type="ChEBI" id="CHEBI:15378"/>
        <dbReference type="ChEBI" id="CHEBI:57792"/>
        <dbReference type="ChEBI" id="CHEBI:62899"/>
        <dbReference type="ChEBI" id="CHEBI:77846"/>
        <dbReference type="ChEBI" id="CHEBI:90778"/>
        <dbReference type="ChEBI" id="CHEBI:232372"/>
        <dbReference type="EC" id="2.8.1.10"/>
    </reaction>
</comment>
<comment type="pathway">
    <text evidence="1">Cofactor biosynthesis; thiamine diphosphate biosynthesis.</text>
</comment>
<comment type="subunit">
    <text evidence="1">Homotetramer. Forms heterodimers with either ThiH or ThiS.</text>
</comment>
<comment type="subcellular location">
    <subcellularLocation>
        <location evidence="1">Cytoplasm</location>
    </subcellularLocation>
</comment>
<comment type="similarity">
    <text evidence="1">Belongs to the ThiG family.</text>
</comment>
<name>THIG_IDILO</name>
<keyword id="KW-0963">Cytoplasm</keyword>
<keyword id="KW-1185">Reference proteome</keyword>
<keyword id="KW-0704">Schiff base</keyword>
<keyword id="KW-0784">Thiamine biosynthesis</keyword>
<keyword id="KW-0808">Transferase</keyword>
<accession>Q5R146</accession>
<sequence length="256" mass="27201">MLRIADRDFHSRLFIGSGKYSSADIMQKSLAASGSELVTLALKRVELERPTDDIVTPIQNLGLQLLPNTSGAKTAQDAIFAARLAREALGTHWLKLEIHPDPNYLLPDPIETLKAAETLVKEGFTVLPYCGADPVLCKRLEEVGCAAVMPLGAPIGSNQGLLTRDFLRIIIEQASLPVIVDAGIGAPSHAVEAMEMGADAVLVNTAIATANDPVAMSKTFRDAVIVGRQAFEAGLSQNASLKASASSPLTEFLESL</sequence>
<gene>
    <name evidence="1" type="primary">thiG</name>
    <name type="ordered locus">IL0769</name>
</gene>
<dbReference type="EC" id="2.8.1.10" evidence="1"/>
<dbReference type="EMBL" id="AE017340">
    <property type="protein sequence ID" value="AAV81610.1"/>
    <property type="molecule type" value="Genomic_DNA"/>
</dbReference>
<dbReference type="RefSeq" id="WP_011234021.1">
    <property type="nucleotide sequence ID" value="NC_006512.1"/>
</dbReference>
<dbReference type="SMR" id="Q5R146"/>
<dbReference type="STRING" id="283942.IL0769"/>
<dbReference type="GeneID" id="41335923"/>
<dbReference type="KEGG" id="ilo:IL0769"/>
<dbReference type="eggNOG" id="COG2022">
    <property type="taxonomic scope" value="Bacteria"/>
</dbReference>
<dbReference type="HOGENOM" id="CLU_062233_1_0_6"/>
<dbReference type="OrthoDB" id="9805935at2"/>
<dbReference type="UniPathway" id="UPA00060"/>
<dbReference type="Proteomes" id="UP000001171">
    <property type="component" value="Chromosome"/>
</dbReference>
<dbReference type="GO" id="GO:0005737">
    <property type="term" value="C:cytoplasm"/>
    <property type="evidence" value="ECO:0007669"/>
    <property type="project" value="UniProtKB-SubCell"/>
</dbReference>
<dbReference type="GO" id="GO:1990107">
    <property type="term" value="F:thiazole synthase activity"/>
    <property type="evidence" value="ECO:0007669"/>
    <property type="project" value="UniProtKB-EC"/>
</dbReference>
<dbReference type="GO" id="GO:0009229">
    <property type="term" value="P:thiamine diphosphate biosynthetic process"/>
    <property type="evidence" value="ECO:0007669"/>
    <property type="project" value="UniProtKB-UniRule"/>
</dbReference>
<dbReference type="CDD" id="cd04728">
    <property type="entry name" value="ThiG"/>
    <property type="match status" value="1"/>
</dbReference>
<dbReference type="FunFam" id="3.20.20.70:FF:000049">
    <property type="entry name" value="Thiazole synthase"/>
    <property type="match status" value="1"/>
</dbReference>
<dbReference type="Gene3D" id="3.20.20.70">
    <property type="entry name" value="Aldolase class I"/>
    <property type="match status" value="1"/>
</dbReference>
<dbReference type="HAMAP" id="MF_00443">
    <property type="entry name" value="ThiG"/>
    <property type="match status" value="1"/>
</dbReference>
<dbReference type="InterPro" id="IPR013785">
    <property type="entry name" value="Aldolase_TIM"/>
</dbReference>
<dbReference type="InterPro" id="IPR033983">
    <property type="entry name" value="Thiazole_synthase_ThiG"/>
</dbReference>
<dbReference type="InterPro" id="IPR008867">
    <property type="entry name" value="ThiG"/>
</dbReference>
<dbReference type="PANTHER" id="PTHR34266">
    <property type="entry name" value="THIAZOLE SYNTHASE"/>
    <property type="match status" value="1"/>
</dbReference>
<dbReference type="PANTHER" id="PTHR34266:SF2">
    <property type="entry name" value="THIAZOLE SYNTHASE"/>
    <property type="match status" value="1"/>
</dbReference>
<dbReference type="Pfam" id="PF05690">
    <property type="entry name" value="ThiG"/>
    <property type="match status" value="1"/>
</dbReference>
<dbReference type="SUPFAM" id="SSF110399">
    <property type="entry name" value="ThiG-like"/>
    <property type="match status" value="1"/>
</dbReference>
<evidence type="ECO:0000255" key="1">
    <source>
        <dbReference type="HAMAP-Rule" id="MF_00443"/>
    </source>
</evidence>